<gene>
    <name evidence="1" type="primary">rpsI</name>
    <name type="ordered locus">BCAN_A0803</name>
</gene>
<name>RS9_BRUC2</name>
<proteinExistence type="inferred from homology"/>
<reference key="1">
    <citation type="submission" date="2007-10" db="EMBL/GenBank/DDBJ databases">
        <title>Brucella canis ATCC 23365 whole genome shotgun sequencing project.</title>
        <authorList>
            <person name="Setubal J.C."/>
            <person name="Bowns C."/>
            <person name="Boyle S."/>
            <person name="Crasta O.R."/>
            <person name="Czar M.J."/>
            <person name="Dharmanolla C."/>
            <person name="Gillespie J.J."/>
            <person name="Kenyon R.W."/>
            <person name="Lu J."/>
            <person name="Mane S."/>
            <person name="Mohapatra S."/>
            <person name="Nagrani S."/>
            <person name="Purkayastha A."/>
            <person name="Rajasimha H.K."/>
            <person name="Shallom J.M."/>
            <person name="Shallom S."/>
            <person name="Shukla M."/>
            <person name="Snyder E.E."/>
            <person name="Sobral B.W."/>
            <person name="Wattam A.R."/>
            <person name="Will R."/>
            <person name="Williams K."/>
            <person name="Yoo H."/>
            <person name="Bruce D."/>
            <person name="Detter C."/>
            <person name="Munk C."/>
            <person name="Brettin T.S."/>
        </authorList>
    </citation>
    <scope>NUCLEOTIDE SEQUENCE [LARGE SCALE GENOMIC DNA]</scope>
    <source>
        <strain>ATCC 23365 / NCTC 10854 / RM-666</strain>
    </source>
</reference>
<accession>A9MAG7</accession>
<keyword id="KW-1185">Reference proteome</keyword>
<keyword id="KW-0687">Ribonucleoprotein</keyword>
<keyword id="KW-0689">Ribosomal protein</keyword>
<organism>
    <name type="scientific">Brucella canis (strain ATCC 23365 / NCTC 10854 / RM-666)</name>
    <dbReference type="NCBI Taxonomy" id="483179"/>
    <lineage>
        <taxon>Bacteria</taxon>
        <taxon>Pseudomonadati</taxon>
        <taxon>Pseudomonadota</taxon>
        <taxon>Alphaproteobacteria</taxon>
        <taxon>Hyphomicrobiales</taxon>
        <taxon>Brucellaceae</taxon>
        <taxon>Brucella/Ochrobactrum group</taxon>
        <taxon>Brucella</taxon>
    </lineage>
</organism>
<comment type="similarity">
    <text evidence="1">Belongs to the universal ribosomal protein uS9 family.</text>
</comment>
<evidence type="ECO:0000255" key="1">
    <source>
        <dbReference type="HAMAP-Rule" id="MF_00532"/>
    </source>
</evidence>
<evidence type="ECO:0000305" key="2"/>
<protein>
    <recommendedName>
        <fullName evidence="1">Small ribosomal subunit protein uS9</fullName>
    </recommendedName>
    <alternativeName>
        <fullName evidence="2">30S ribosomal protein S9</fullName>
    </alternativeName>
</protein>
<feature type="chain" id="PRO_1000081804" description="Small ribosomal subunit protein uS9">
    <location>
        <begin position="1"/>
        <end position="158"/>
    </location>
</feature>
<sequence>MAESINSLEELGTVAKTEAAAPVHVQKLDAQGRAYATGKRKDAVARVWVKPGTGKITVNDKEFEKYFARPVLQMILQQPIVASNRAGQFDIVATVAGGGLSGQAGAVRHGISKALTYYEPGLRTVLKKGGFLTRDSRVVERKKYGKAKARRSFQFSKR</sequence>
<dbReference type="EMBL" id="CP000872">
    <property type="protein sequence ID" value="ABX61870.1"/>
    <property type="molecule type" value="Genomic_DNA"/>
</dbReference>
<dbReference type="RefSeq" id="WP_002963925.1">
    <property type="nucleotide sequence ID" value="NC_010103.1"/>
</dbReference>
<dbReference type="SMR" id="A9MAG7"/>
<dbReference type="GeneID" id="97533901"/>
<dbReference type="KEGG" id="bcs:BCAN_A0803"/>
<dbReference type="HOGENOM" id="CLU_046483_2_0_5"/>
<dbReference type="PhylomeDB" id="A9MAG7"/>
<dbReference type="Proteomes" id="UP000001385">
    <property type="component" value="Chromosome I"/>
</dbReference>
<dbReference type="GO" id="GO:0022627">
    <property type="term" value="C:cytosolic small ribosomal subunit"/>
    <property type="evidence" value="ECO:0007669"/>
    <property type="project" value="TreeGrafter"/>
</dbReference>
<dbReference type="GO" id="GO:0003723">
    <property type="term" value="F:RNA binding"/>
    <property type="evidence" value="ECO:0007669"/>
    <property type="project" value="TreeGrafter"/>
</dbReference>
<dbReference type="GO" id="GO:0003735">
    <property type="term" value="F:structural constituent of ribosome"/>
    <property type="evidence" value="ECO:0007669"/>
    <property type="project" value="InterPro"/>
</dbReference>
<dbReference type="GO" id="GO:0006412">
    <property type="term" value="P:translation"/>
    <property type="evidence" value="ECO:0007669"/>
    <property type="project" value="UniProtKB-UniRule"/>
</dbReference>
<dbReference type="FunFam" id="3.30.230.10:FF:000034">
    <property type="entry name" value="30S ribosomal protein S9"/>
    <property type="match status" value="1"/>
</dbReference>
<dbReference type="Gene3D" id="3.30.230.10">
    <property type="match status" value="1"/>
</dbReference>
<dbReference type="HAMAP" id="MF_00532_B">
    <property type="entry name" value="Ribosomal_uS9_B"/>
    <property type="match status" value="1"/>
</dbReference>
<dbReference type="InterPro" id="IPR020568">
    <property type="entry name" value="Ribosomal_Su5_D2-typ_SF"/>
</dbReference>
<dbReference type="InterPro" id="IPR000754">
    <property type="entry name" value="Ribosomal_uS9"/>
</dbReference>
<dbReference type="InterPro" id="IPR023035">
    <property type="entry name" value="Ribosomal_uS9_bac/plastid"/>
</dbReference>
<dbReference type="InterPro" id="IPR020574">
    <property type="entry name" value="Ribosomal_uS9_CS"/>
</dbReference>
<dbReference type="InterPro" id="IPR014721">
    <property type="entry name" value="Ribsml_uS5_D2-typ_fold_subgr"/>
</dbReference>
<dbReference type="NCBIfam" id="NF001099">
    <property type="entry name" value="PRK00132.1"/>
    <property type="match status" value="1"/>
</dbReference>
<dbReference type="PANTHER" id="PTHR21569">
    <property type="entry name" value="RIBOSOMAL PROTEIN S9"/>
    <property type="match status" value="1"/>
</dbReference>
<dbReference type="PANTHER" id="PTHR21569:SF1">
    <property type="entry name" value="SMALL RIBOSOMAL SUBUNIT PROTEIN US9M"/>
    <property type="match status" value="1"/>
</dbReference>
<dbReference type="Pfam" id="PF00380">
    <property type="entry name" value="Ribosomal_S9"/>
    <property type="match status" value="1"/>
</dbReference>
<dbReference type="SUPFAM" id="SSF54211">
    <property type="entry name" value="Ribosomal protein S5 domain 2-like"/>
    <property type="match status" value="1"/>
</dbReference>
<dbReference type="PROSITE" id="PS00360">
    <property type="entry name" value="RIBOSOMAL_S9"/>
    <property type="match status" value="1"/>
</dbReference>